<proteinExistence type="inferred from homology"/>
<sequence>MMRKYLILLILLPALAVGIIPDVTTTVGDMVDTSYLIVNCRADIGTQELPPTKLELSSDKIKFTATDLSSTSTQACERSIVVTKTGLNILRVAGVDEFGYTAEAIDENKYIASCVINDEDKINRVLRIKITHPAMFDYTEWVCKTTASDGVETTARGGIDTGAILFDFENSDMELRTNGMKKDKKTLPMTFDCLIDGPFKTVIKQEIYGHKLPLFGVDMVLKKGNGDTSRIRGELFGRNKIDIDETPPLDDFTIRKESDLCGDTTRLKEITLAATNNNEFAANNIVIFLNTGFTNDDNSRTNYHNDQKKENAVLDPYRELLKTECFGRHTKTMVTTPINQLQHDTQCFRYDFIGSAQFISDNGHILAGVNKLSLHGGLINPTEEYDLTLNWEEDMDFQTERILLEMPSKIGAIYTGVRTGMPLRVVIPTHNLISDLYKEVAEAMVSFNRMEIKMLKLDQNKIAEVSCNSHKPFFYKAIVIMQKGCWIDTIDAPSRCLNTDDNRAFKVVTIEDYTFYLRRKIHSQYRDAVYGRDMDYRCMGSYYYCFSDYRRYNKLRDMVVVEQPIDTKLTNTILAASNAKYSSECVQDNVENLVQADFNVKGYTDGIADNLITHINTDLNMGSTMARKFPIAEITNSDVKCHCGQVVNTCNRYSFTNAINTLGTIYQPNTFPLVLTGSNNRESTMWCESMGFRSPIKKAKIMAANFACGGSTTPFIDFSDDLLNYLPTPIFTTVKDLTAAPEKRYIIECKDIPTACLSESSISINIIMDWIYDPPKTQSELGLDSEPEATGKTYKSKRVIWQKTNGPIFGGEFKIERASFYTNAFTNQPELYKNTVLPEDELFDYISDGYTHTFFKTYFPENEIKPTSATCSYGKINILKTATITDFSSWITTDKQVLCTGSNYQYNVKRIGNKIFTTDVTWPNDCPSVDNVKIELLSNNEADLLYSVVCSSQGTAIIDGLKTITYSEDPIPMDSHMDGNVAYCIPTDNGIKVVLATNLRDEYVNSLKLRTGYQINELSINQIDTAQVDTLGQGCITPPRHYPIDIAVDSTGIPQSFVFDCTIPEYLQSSMDTNPATCTSFPEVETVKLVIVYSGVFSSSVKHTIAMRGRTKGPCSGLANTECELLPQVNGLDKGIRYTIKDIYFSNLFKNTPGLSVRAYCTLPNIAETNTVTKELSKTMTRIKLRVPQNAPPETPHYDTEYMYKGVNRFYYYMSYTVLGVVVITILTMSIILCLKFRVKMKLSRQQMTSTGEGQQMLYIHAEV</sequence>
<reference key="1">
    <citation type="journal article" date="2005" name="J. Gen. Virol.">
        <title>A novel class of herpesvirus with bivalve hosts.</title>
        <authorList>
            <person name="Davison A.J."/>
            <person name="Trus B.L."/>
            <person name="Cheng N."/>
            <person name="Steven A.C."/>
            <person name="Watson M.S."/>
            <person name="Cunningham C."/>
            <person name="Le Deuff R.M."/>
            <person name="Renault T."/>
        </authorList>
    </citation>
    <scope>NUCLEOTIDE SEQUENCE [LARGE SCALE GENOMIC DNA]</scope>
</reference>
<feature type="signal peptide" evidence="1">
    <location>
        <begin position="1"/>
        <end position="18"/>
    </location>
</feature>
<feature type="chain" id="PRO_0000385098" description="Uncharacterized protein ORF77">
    <location>
        <begin position="19"/>
        <end position="1264"/>
    </location>
</feature>
<feature type="transmembrane region" description="Helical" evidence="1">
    <location>
        <begin position="1215"/>
        <end position="1235"/>
    </location>
</feature>
<gene>
    <name type="ORF">ORF77</name>
</gene>
<protein>
    <recommendedName>
        <fullName>Uncharacterized protein ORF77</fullName>
    </recommendedName>
</protein>
<keyword id="KW-1043">Host membrane</keyword>
<keyword id="KW-0472">Membrane</keyword>
<keyword id="KW-1185">Reference proteome</keyword>
<keyword id="KW-0732">Signal</keyword>
<keyword id="KW-0812">Transmembrane</keyword>
<keyword id="KW-1133">Transmembrane helix</keyword>
<organism>
    <name type="scientific">Ostreid herpesvirus 1 (isolate France)</name>
    <name type="common">OsHV-1</name>
    <name type="synonym">Pacific oyster herpesvirus</name>
    <dbReference type="NCBI Taxonomy" id="654903"/>
    <lineage>
        <taxon>Viruses</taxon>
        <taxon>Duplodnaviria</taxon>
        <taxon>Heunggongvirae</taxon>
        <taxon>Peploviricota</taxon>
        <taxon>Herviviricetes</taxon>
        <taxon>Herpesvirales</taxon>
        <taxon>Malacoherpesviridae</taxon>
        <taxon>Ostreavirus</taxon>
        <taxon>Ostreavirus ostreidmalaco1</taxon>
        <taxon>Ostreid herpesvirus 1</taxon>
    </lineage>
</organism>
<accession>Q6R7F2</accession>
<dbReference type="EMBL" id="AY509253">
    <property type="protein sequence ID" value="AAS00963.1"/>
    <property type="molecule type" value="Genomic_DNA"/>
</dbReference>
<dbReference type="RefSeq" id="YP_024616.1">
    <property type="nucleotide sequence ID" value="NC_005881.2"/>
</dbReference>
<dbReference type="KEGG" id="vg:2948262"/>
<dbReference type="Proteomes" id="UP000007021">
    <property type="component" value="Segment"/>
</dbReference>
<dbReference type="GO" id="GO:0033644">
    <property type="term" value="C:host cell membrane"/>
    <property type="evidence" value="ECO:0007669"/>
    <property type="project" value="UniProtKB-SubCell"/>
</dbReference>
<dbReference type="GO" id="GO:0016020">
    <property type="term" value="C:membrane"/>
    <property type="evidence" value="ECO:0007669"/>
    <property type="project" value="UniProtKB-KW"/>
</dbReference>
<organismHost>
    <name type="scientific">Magallana gigas</name>
    <name type="common">Pacific oyster</name>
    <name type="synonym">Crassostrea gigas</name>
    <dbReference type="NCBI Taxonomy" id="29159"/>
</organismHost>
<organismHost>
    <name type="scientific">Pecten maximus</name>
    <name type="common">King scallop</name>
    <name type="synonym">Pilgrim's clam</name>
    <dbReference type="NCBI Taxonomy" id="6579"/>
</organismHost>
<name>Y077_OSHVF</name>
<evidence type="ECO:0000255" key="1"/>
<evidence type="ECO:0000305" key="2"/>
<comment type="subcellular location">
    <subcellularLocation>
        <location evidence="2">Host membrane</location>
        <topology evidence="2">Single-pass type I membrane protein</topology>
    </subcellularLocation>
</comment>